<feature type="chain" id="PRO_0000226119" description="Serine/threonine-protein phosphatase 2A activator 2">
    <location>
        <begin position="1"/>
        <end position="354"/>
    </location>
</feature>
<reference key="1">
    <citation type="journal article" date="2004" name="Nature">
        <title>Genome evolution in yeasts.</title>
        <authorList>
            <person name="Dujon B."/>
            <person name="Sherman D."/>
            <person name="Fischer G."/>
            <person name="Durrens P."/>
            <person name="Casaregola S."/>
            <person name="Lafontaine I."/>
            <person name="de Montigny J."/>
            <person name="Marck C."/>
            <person name="Neuveglise C."/>
            <person name="Talla E."/>
            <person name="Goffard N."/>
            <person name="Frangeul L."/>
            <person name="Aigle M."/>
            <person name="Anthouard V."/>
            <person name="Babour A."/>
            <person name="Barbe V."/>
            <person name="Barnay S."/>
            <person name="Blanchin S."/>
            <person name="Beckerich J.-M."/>
            <person name="Beyne E."/>
            <person name="Bleykasten C."/>
            <person name="Boisrame A."/>
            <person name="Boyer J."/>
            <person name="Cattolico L."/>
            <person name="Confanioleri F."/>
            <person name="de Daruvar A."/>
            <person name="Despons L."/>
            <person name="Fabre E."/>
            <person name="Fairhead C."/>
            <person name="Ferry-Dumazet H."/>
            <person name="Groppi A."/>
            <person name="Hantraye F."/>
            <person name="Hennequin C."/>
            <person name="Jauniaux N."/>
            <person name="Joyet P."/>
            <person name="Kachouri R."/>
            <person name="Kerrest A."/>
            <person name="Koszul R."/>
            <person name="Lemaire M."/>
            <person name="Lesur I."/>
            <person name="Ma L."/>
            <person name="Muller H."/>
            <person name="Nicaud J.-M."/>
            <person name="Nikolski M."/>
            <person name="Oztas S."/>
            <person name="Ozier-Kalogeropoulos O."/>
            <person name="Pellenz S."/>
            <person name="Potier S."/>
            <person name="Richard G.-F."/>
            <person name="Straub M.-L."/>
            <person name="Suleau A."/>
            <person name="Swennen D."/>
            <person name="Tekaia F."/>
            <person name="Wesolowski-Louvel M."/>
            <person name="Westhof E."/>
            <person name="Wirth B."/>
            <person name="Zeniou-Meyer M."/>
            <person name="Zivanovic Y."/>
            <person name="Bolotin-Fukuhara M."/>
            <person name="Thierry A."/>
            <person name="Bouchier C."/>
            <person name="Caudron B."/>
            <person name="Scarpelli C."/>
            <person name="Gaillardin C."/>
            <person name="Weissenbach J."/>
            <person name="Wincker P."/>
            <person name="Souciet J.-L."/>
        </authorList>
    </citation>
    <scope>NUCLEOTIDE SEQUENCE [LARGE SCALE GENOMIC DNA]</scope>
    <source>
        <strain>CLIB 122 / E 150</strain>
    </source>
</reference>
<accession>Q6C712</accession>
<dbReference type="EC" id="5.2.1.8"/>
<dbReference type="EMBL" id="CR382131">
    <property type="protein sequence ID" value="CAG79131.1"/>
    <property type="status" value="ALT_SEQ"/>
    <property type="molecule type" value="Genomic_DNA"/>
</dbReference>
<dbReference type="RefSeq" id="XP_503550.1">
    <property type="nucleotide sequence ID" value="XM_503550.1"/>
</dbReference>
<dbReference type="SMR" id="Q6C712"/>
<dbReference type="FunCoup" id="Q6C712">
    <property type="interactions" value="537"/>
</dbReference>
<dbReference type="STRING" id="284591.Q6C712"/>
<dbReference type="KEGG" id="yli:2912206"/>
<dbReference type="InParanoid" id="Q6C712"/>
<dbReference type="OrthoDB" id="123125at4891"/>
<dbReference type="Proteomes" id="UP000001300">
    <property type="component" value="Chromosome E"/>
</dbReference>
<dbReference type="GO" id="GO:0005737">
    <property type="term" value="C:cytoplasm"/>
    <property type="evidence" value="ECO:0000318"/>
    <property type="project" value="GO_Central"/>
</dbReference>
<dbReference type="GO" id="GO:0005634">
    <property type="term" value="C:nucleus"/>
    <property type="evidence" value="ECO:0000318"/>
    <property type="project" value="GO_Central"/>
</dbReference>
<dbReference type="GO" id="GO:0000159">
    <property type="term" value="C:protein phosphatase type 2A complex"/>
    <property type="evidence" value="ECO:0000318"/>
    <property type="project" value="GO_Central"/>
</dbReference>
<dbReference type="GO" id="GO:0003755">
    <property type="term" value="F:peptidyl-prolyl cis-trans isomerase activity"/>
    <property type="evidence" value="ECO:0000318"/>
    <property type="project" value="GO_Central"/>
</dbReference>
<dbReference type="GO" id="GO:0008160">
    <property type="term" value="F:protein tyrosine phosphatase activator activity"/>
    <property type="evidence" value="ECO:0000318"/>
    <property type="project" value="GO_Central"/>
</dbReference>
<dbReference type="GO" id="GO:0007052">
    <property type="term" value="P:mitotic spindle organization"/>
    <property type="evidence" value="ECO:0000318"/>
    <property type="project" value="GO_Central"/>
</dbReference>
<dbReference type="CDD" id="cd04087">
    <property type="entry name" value="PTPA"/>
    <property type="match status" value="1"/>
</dbReference>
<dbReference type="FunFam" id="1.20.120.1150:FF:000002">
    <property type="entry name" value="Serine/threonine-protein phosphatase 2A activator"/>
    <property type="match status" value="1"/>
</dbReference>
<dbReference type="Gene3D" id="1.20.120.1150">
    <property type="match status" value="1"/>
</dbReference>
<dbReference type="InterPro" id="IPR004327">
    <property type="entry name" value="Phstyr_phstse_ac"/>
</dbReference>
<dbReference type="InterPro" id="IPR043170">
    <property type="entry name" value="PTPA_C_lid"/>
</dbReference>
<dbReference type="InterPro" id="IPR037218">
    <property type="entry name" value="PTPA_sf"/>
</dbReference>
<dbReference type="PANTHER" id="PTHR10012">
    <property type="entry name" value="SERINE/THREONINE-PROTEIN PHOSPHATASE 2A REGULATORY SUBUNIT B"/>
    <property type="match status" value="1"/>
</dbReference>
<dbReference type="PANTHER" id="PTHR10012:SF5">
    <property type="entry name" value="SERINE_THREONINE-PROTEIN PHOSPHATASE 2A ACTIVATOR 2"/>
    <property type="match status" value="1"/>
</dbReference>
<dbReference type="Pfam" id="PF03095">
    <property type="entry name" value="PTPA"/>
    <property type="match status" value="1"/>
</dbReference>
<dbReference type="PIRSF" id="PIRSF016325">
    <property type="entry name" value="Phstyr_phstse_ac"/>
    <property type="match status" value="1"/>
</dbReference>
<dbReference type="SUPFAM" id="SSF140984">
    <property type="entry name" value="PTPA-like"/>
    <property type="match status" value="1"/>
</dbReference>
<name>PTPA2_YARLI</name>
<gene>
    <name type="primary">RRD2</name>
    <name type="ordered locus">YALI0E04642g</name>
</gene>
<proteinExistence type="inferred from homology"/>
<comment type="function">
    <text evidence="1">PPIases accelerate the folding of proteins. It catalyzes the cis-trans isomerization of proline imidic peptide bonds in oligopeptides. Acts as a regulatory subunit for PP2A-like phosphatases modulating their activity or substrate specificity, probably by inducing a conformational change in the catalytic subunit, a direct target of the PPIase. Can reactivate inactive phosphatase PP2A-phosphatase methylesterase complexes (PP2Ai) in presence of ATP and Mg(2+) by dissociating the inactive form from the complex (By similarity).</text>
</comment>
<comment type="catalytic activity">
    <reaction>
        <text>[protein]-peptidylproline (omega=180) = [protein]-peptidylproline (omega=0)</text>
        <dbReference type="Rhea" id="RHEA:16237"/>
        <dbReference type="Rhea" id="RHEA-COMP:10747"/>
        <dbReference type="Rhea" id="RHEA-COMP:10748"/>
        <dbReference type="ChEBI" id="CHEBI:83833"/>
        <dbReference type="ChEBI" id="CHEBI:83834"/>
        <dbReference type="EC" id="5.2.1.8"/>
    </reaction>
</comment>
<comment type="subcellular location">
    <subcellularLocation>
        <location evidence="1">Cytoplasm</location>
    </subcellularLocation>
</comment>
<comment type="similarity">
    <text evidence="2">Belongs to the PTPA-type PPIase family.</text>
</comment>
<comment type="sequence caution" evidence="2">
    <conflict type="erroneous gene model prediction">
        <sequence resource="EMBL-CDS" id="CAG79131"/>
    </conflict>
</comment>
<organism>
    <name type="scientific">Yarrowia lipolytica (strain CLIB 122 / E 150)</name>
    <name type="common">Yeast</name>
    <name type="synonym">Candida lipolytica</name>
    <dbReference type="NCBI Taxonomy" id="284591"/>
    <lineage>
        <taxon>Eukaryota</taxon>
        <taxon>Fungi</taxon>
        <taxon>Dikarya</taxon>
        <taxon>Ascomycota</taxon>
        <taxon>Saccharomycotina</taxon>
        <taxon>Dipodascomycetes</taxon>
        <taxon>Dipodascales</taxon>
        <taxon>Dipodascales incertae sedis</taxon>
        <taxon>Yarrowia</taxon>
    </lineage>
</organism>
<sequence length="354" mass="40029">MSHSHPVRRILSPKDLEIFGASDTKKQVFGFVKVLNYYVVGKGNSYETLKHPIIGKLVAILDKVIDLVAKYPPEDATSSRFGKPEFRDFHQALEENAKDWISDLGELEDWQLVELCTYFAASFGDRTRIDFGSGHELNFICFLFCLRQLGLLDTDSSAAVLTVFVQYLKTMRAVQASYWLEPAGSHGVWGLDDYHFLPFMFGSAQLACHKYLRPLSIHDMEMLDMWKHEYLYMGCIHFINSVKTTASLRWHSPMLDDISGVKTWAKVNQGMVKMYDAEVLSKLPILQHFMFGQLIKAPEGVSPPPDPNAEVQHIHNHWADCCGIKVPSAIAASEMSQKPGDLRKLRGSGVLPFD</sequence>
<keyword id="KW-0963">Cytoplasm</keyword>
<keyword id="KW-0413">Isomerase</keyword>
<keyword id="KW-1185">Reference proteome</keyword>
<keyword id="KW-0697">Rotamase</keyword>
<protein>
    <recommendedName>
        <fullName>Serine/threonine-protein phosphatase 2A activator 2</fullName>
        <ecNumber>5.2.1.8</ecNumber>
    </recommendedName>
    <alternativeName>
        <fullName>Peptidyl-prolyl cis-trans isomerase PTPA-2</fullName>
        <shortName>PPIase PTPA-2</shortName>
        <shortName>Rotamase PTPA-2</shortName>
    </alternativeName>
    <alternativeName>
        <fullName>Phosphotyrosyl phosphatase activator 2</fullName>
    </alternativeName>
</protein>
<evidence type="ECO:0000250" key="1"/>
<evidence type="ECO:0000305" key="2"/>